<reference key="1">
    <citation type="journal article" date="2004" name="Nucleic Acids Res.">
        <title>Comparative analysis of the Borrelia garinii genome.</title>
        <authorList>
            <person name="Gloeckner G."/>
            <person name="Lehmann R."/>
            <person name="Romualdi A."/>
            <person name="Pradella S."/>
            <person name="Schulte-Spechtel U."/>
            <person name="Schilhabel M."/>
            <person name="Wilske B."/>
            <person name="Suehnel J."/>
            <person name="Platzer M."/>
        </authorList>
    </citation>
    <scope>NUCLEOTIDE SEQUENCE [LARGE SCALE GENOMIC DNA]</scope>
    <source>
        <strain>ATCC BAA-2496 / DSM 23469 / PBi</strain>
    </source>
</reference>
<dbReference type="EC" id="2.7.7.3" evidence="1"/>
<dbReference type="EMBL" id="CP000013">
    <property type="protein sequence ID" value="AAU07551.1"/>
    <property type="molecule type" value="Genomic_DNA"/>
</dbReference>
<dbReference type="RefSeq" id="WP_011194003.1">
    <property type="nucleotide sequence ID" value="NZ_CP028872.1"/>
</dbReference>
<dbReference type="SMR" id="Q660H0"/>
<dbReference type="GeneID" id="45161499"/>
<dbReference type="KEGG" id="bga:BG0724"/>
<dbReference type="eggNOG" id="COG0669">
    <property type="taxonomic scope" value="Bacteria"/>
</dbReference>
<dbReference type="HOGENOM" id="CLU_100149_1_1_12"/>
<dbReference type="OrthoDB" id="9806661at2"/>
<dbReference type="UniPathway" id="UPA00241">
    <property type="reaction ID" value="UER00355"/>
</dbReference>
<dbReference type="Proteomes" id="UP000002276">
    <property type="component" value="Chromosome"/>
</dbReference>
<dbReference type="GO" id="GO:0005737">
    <property type="term" value="C:cytoplasm"/>
    <property type="evidence" value="ECO:0007669"/>
    <property type="project" value="UniProtKB-SubCell"/>
</dbReference>
<dbReference type="GO" id="GO:0005524">
    <property type="term" value="F:ATP binding"/>
    <property type="evidence" value="ECO:0007669"/>
    <property type="project" value="UniProtKB-KW"/>
</dbReference>
<dbReference type="GO" id="GO:0004595">
    <property type="term" value="F:pantetheine-phosphate adenylyltransferase activity"/>
    <property type="evidence" value="ECO:0007669"/>
    <property type="project" value="UniProtKB-UniRule"/>
</dbReference>
<dbReference type="GO" id="GO:0015937">
    <property type="term" value="P:coenzyme A biosynthetic process"/>
    <property type="evidence" value="ECO:0007669"/>
    <property type="project" value="UniProtKB-UniRule"/>
</dbReference>
<dbReference type="Gene3D" id="3.40.50.620">
    <property type="entry name" value="HUPs"/>
    <property type="match status" value="1"/>
</dbReference>
<dbReference type="HAMAP" id="MF_00151">
    <property type="entry name" value="PPAT_bact"/>
    <property type="match status" value="1"/>
</dbReference>
<dbReference type="InterPro" id="IPR004821">
    <property type="entry name" value="Cyt_trans-like"/>
</dbReference>
<dbReference type="InterPro" id="IPR001980">
    <property type="entry name" value="PPAT"/>
</dbReference>
<dbReference type="InterPro" id="IPR014729">
    <property type="entry name" value="Rossmann-like_a/b/a_fold"/>
</dbReference>
<dbReference type="NCBIfam" id="TIGR01510">
    <property type="entry name" value="coaD_prev_kdtB"/>
    <property type="match status" value="1"/>
</dbReference>
<dbReference type="NCBIfam" id="TIGR00125">
    <property type="entry name" value="cyt_tran_rel"/>
    <property type="match status" value="1"/>
</dbReference>
<dbReference type="PANTHER" id="PTHR21342">
    <property type="entry name" value="PHOSPHOPANTETHEINE ADENYLYLTRANSFERASE"/>
    <property type="match status" value="1"/>
</dbReference>
<dbReference type="PANTHER" id="PTHR21342:SF1">
    <property type="entry name" value="PHOSPHOPANTETHEINE ADENYLYLTRANSFERASE"/>
    <property type="match status" value="1"/>
</dbReference>
<dbReference type="Pfam" id="PF01467">
    <property type="entry name" value="CTP_transf_like"/>
    <property type="match status" value="1"/>
</dbReference>
<dbReference type="PRINTS" id="PR01020">
    <property type="entry name" value="LPSBIOSNTHSS"/>
</dbReference>
<dbReference type="SUPFAM" id="SSF52374">
    <property type="entry name" value="Nucleotidylyl transferase"/>
    <property type="match status" value="1"/>
</dbReference>
<name>COAD_BORGP</name>
<evidence type="ECO:0000255" key="1">
    <source>
        <dbReference type="HAMAP-Rule" id="MF_00151"/>
    </source>
</evidence>
<comment type="function">
    <text evidence="1">Reversibly transfers an adenylyl group from ATP to 4'-phosphopantetheine, yielding dephospho-CoA (dPCoA) and pyrophosphate.</text>
</comment>
<comment type="catalytic activity">
    <reaction evidence="1">
        <text>(R)-4'-phosphopantetheine + ATP + H(+) = 3'-dephospho-CoA + diphosphate</text>
        <dbReference type="Rhea" id="RHEA:19801"/>
        <dbReference type="ChEBI" id="CHEBI:15378"/>
        <dbReference type="ChEBI" id="CHEBI:30616"/>
        <dbReference type="ChEBI" id="CHEBI:33019"/>
        <dbReference type="ChEBI" id="CHEBI:57328"/>
        <dbReference type="ChEBI" id="CHEBI:61723"/>
        <dbReference type="EC" id="2.7.7.3"/>
    </reaction>
</comment>
<comment type="cofactor">
    <cofactor evidence="1">
        <name>Mg(2+)</name>
        <dbReference type="ChEBI" id="CHEBI:18420"/>
    </cofactor>
</comment>
<comment type="pathway">
    <text evidence="1">Cofactor biosynthesis; coenzyme A biosynthesis; CoA from (R)-pantothenate: step 4/5.</text>
</comment>
<comment type="subunit">
    <text evidence="1">Homohexamer.</text>
</comment>
<comment type="subcellular location">
    <subcellularLocation>
        <location evidence="1">Cytoplasm</location>
    </subcellularLocation>
</comment>
<comment type="similarity">
    <text evidence="1">Belongs to the bacterial CoaD family.</text>
</comment>
<protein>
    <recommendedName>
        <fullName evidence="1">Phosphopantetheine adenylyltransferase</fullName>
        <ecNumber evidence="1">2.7.7.3</ecNumber>
    </recommendedName>
    <alternativeName>
        <fullName evidence="1">Dephospho-CoA pyrophosphorylase</fullName>
    </alternativeName>
    <alternativeName>
        <fullName evidence="1">Pantetheine-phosphate adenylyltransferase</fullName>
        <shortName evidence="1">PPAT</shortName>
    </alternativeName>
</protein>
<feature type="chain" id="PRO_0000156178" description="Phosphopantetheine adenylyltransferase">
    <location>
        <begin position="1"/>
        <end position="163"/>
    </location>
</feature>
<feature type="binding site" evidence="1">
    <location>
        <begin position="9"/>
        <end position="10"/>
    </location>
    <ligand>
        <name>ATP</name>
        <dbReference type="ChEBI" id="CHEBI:30616"/>
    </ligand>
</feature>
<feature type="binding site" evidence="1">
    <location>
        <position position="9"/>
    </location>
    <ligand>
        <name>substrate</name>
    </ligand>
</feature>
<feature type="binding site" evidence="1">
    <location>
        <position position="17"/>
    </location>
    <ligand>
        <name>ATP</name>
        <dbReference type="ChEBI" id="CHEBI:30616"/>
    </ligand>
</feature>
<feature type="binding site" evidence="1">
    <location>
        <position position="41"/>
    </location>
    <ligand>
        <name>substrate</name>
    </ligand>
</feature>
<feature type="binding site" evidence="1">
    <location>
        <position position="75"/>
    </location>
    <ligand>
        <name>substrate</name>
    </ligand>
</feature>
<feature type="binding site" evidence="1">
    <location>
        <position position="89"/>
    </location>
    <ligand>
        <name>substrate</name>
    </ligand>
</feature>
<feature type="binding site" evidence="1">
    <location>
        <begin position="90"/>
        <end position="92"/>
    </location>
    <ligand>
        <name>ATP</name>
        <dbReference type="ChEBI" id="CHEBI:30616"/>
    </ligand>
</feature>
<feature type="binding site" evidence="1">
    <location>
        <position position="100"/>
    </location>
    <ligand>
        <name>ATP</name>
        <dbReference type="ChEBI" id="CHEBI:30616"/>
    </ligand>
</feature>
<feature type="binding site" evidence="1">
    <location>
        <begin position="125"/>
        <end position="131"/>
    </location>
    <ligand>
        <name>ATP</name>
        <dbReference type="ChEBI" id="CHEBI:30616"/>
    </ligand>
</feature>
<feature type="site" description="Transition state stabilizer" evidence="1">
    <location>
        <position position="17"/>
    </location>
</feature>
<gene>
    <name evidence="1" type="primary">coaD</name>
    <name type="ordered locus">BG0724</name>
</gene>
<keyword id="KW-0067">ATP-binding</keyword>
<keyword id="KW-0173">Coenzyme A biosynthesis</keyword>
<keyword id="KW-0963">Cytoplasm</keyword>
<keyword id="KW-0460">Magnesium</keyword>
<keyword id="KW-0547">Nucleotide-binding</keyword>
<keyword id="KW-0548">Nucleotidyltransferase</keyword>
<keyword id="KW-0808">Transferase</keyword>
<proteinExistence type="inferred from homology"/>
<organism>
    <name type="scientific">Borrelia garinii subsp. bavariensis (strain ATCC BAA-2496 / DSM 23469 / PBi)</name>
    <name type="common">Borreliella bavariensis</name>
    <dbReference type="NCBI Taxonomy" id="290434"/>
    <lineage>
        <taxon>Bacteria</taxon>
        <taxon>Pseudomonadati</taxon>
        <taxon>Spirochaetota</taxon>
        <taxon>Spirochaetia</taxon>
        <taxon>Spirochaetales</taxon>
        <taxon>Borreliaceae</taxon>
        <taxon>Borreliella</taxon>
    </lineage>
</organism>
<accession>Q660H0</accession>
<sequence>MKVAVFPGSFDPITWGHIDLIKRSLAIFDKVVVLVAKNKSKKYLLSDVERFSLAKDVISSLNFLNVFVDRYSGFIVDYALINSIKFIVRGIRAFNDFDIEFERYLVNNKLNFKIDTIFLPSSAEHLYVRSDFVKELMMKKDVDLSHFVPELVFNRLKSKFIDK</sequence>